<accession>A7Z2L7</accession>
<evidence type="ECO:0000255" key="1">
    <source>
        <dbReference type="HAMAP-Rule" id="MF_01114"/>
    </source>
</evidence>
<dbReference type="EMBL" id="CP000560">
    <property type="protein sequence ID" value="ABS73243.1"/>
    <property type="molecule type" value="Genomic_DNA"/>
</dbReference>
<dbReference type="RefSeq" id="WP_012117114.1">
    <property type="nucleotide sequence ID" value="NC_009725.2"/>
</dbReference>
<dbReference type="SMR" id="A7Z2L7"/>
<dbReference type="GeneID" id="93079992"/>
<dbReference type="KEGG" id="bay:RBAM_008590"/>
<dbReference type="HOGENOM" id="CLU_066607_4_0_9"/>
<dbReference type="Proteomes" id="UP000001120">
    <property type="component" value="Chromosome"/>
</dbReference>
<dbReference type="GO" id="GO:0005737">
    <property type="term" value="C:cytoplasm"/>
    <property type="evidence" value="ECO:0007669"/>
    <property type="project" value="UniProtKB-SubCell"/>
</dbReference>
<dbReference type="GO" id="GO:0006282">
    <property type="term" value="P:regulation of DNA repair"/>
    <property type="evidence" value="ECO:0007669"/>
    <property type="project" value="UniProtKB-UniRule"/>
</dbReference>
<dbReference type="Gene3D" id="1.10.10.10">
    <property type="entry name" value="Winged helix-like DNA-binding domain superfamily/Winged helix DNA-binding domain"/>
    <property type="match status" value="4"/>
</dbReference>
<dbReference type="HAMAP" id="MF_01114">
    <property type="entry name" value="RecX"/>
    <property type="match status" value="1"/>
</dbReference>
<dbReference type="InterPro" id="IPR053926">
    <property type="entry name" value="RecX_HTH_1st"/>
</dbReference>
<dbReference type="InterPro" id="IPR053924">
    <property type="entry name" value="RecX_HTH_2nd"/>
</dbReference>
<dbReference type="InterPro" id="IPR053925">
    <property type="entry name" value="RecX_HTH_3rd"/>
</dbReference>
<dbReference type="InterPro" id="IPR003783">
    <property type="entry name" value="Regulatory_RecX"/>
</dbReference>
<dbReference type="InterPro" id="IPR036388">
    <property type="entry name" value="WH-like_DNA-bd_sf"/>
</dbReference>
<dbReference type="NCBIfam" id="NF010733">
    <property type="entry name" value="PRK14135.1"/>
    <property type="match status" value="1"/>
</dbReference>
<dbReference type="PANTHER" id="PTHR33602">
    <property type="entry name" value="REGULATORY PROTEIN RECX FAMILY PROTEIN"/>
    <property type="match status" value="1"/>
</dbReference>
<dbReference type="PANTHER" id="PTHR33602:SF1">
    <property type="entry name" value="REGULATORY PROTEIN RECX FAMILY PROTEIN"/>
    <property type="match status" value="1"/>
</dbReference>
<dbReference type="Pfam" id="PF21982">
    <property type="entry name" value="RecX_HTH1"/>
    <property type="match status" value="1"/>
</dbReference>
<dbReference type="Pfam" id="PF02631">
    <property type="entry name" value="RecX_HTH2"/>
    <property type="match status" value="1"/>
</dbReference>
<dbReference type="Pfam" id="PF21981">
    <property type="entry name" value="RecX_HTH3"/>
    <property type="match status" value="2"/>
</dbReference>
<gene>
    <name evidence="1" type="primary">recX</name>
    <name type="ordered locus">RBAM_008590</name>
</gene>
<organism>
    <name type="scientific">Bacillus velezensis (strain DSM 23117 / BGSC 10A6 / LMG 26770 / FZB42)</name>
    <name type="common">Bacillus amyloliquefaciens subsp. plantarum</name>
    <dbReference type="NCBI Taxonomy" id="326423"/>
    <lineage>
        <taxon>Bacteria</taxon>
        <taxon>Bacillati</taxon>
        <taxon>Bacillota</taxon>
        <taxon>Bacilli</taxon>
        <taxon>Bacillales</taxon>
        <taxon>Bacillaceae</taxon>
        <taxon>Bacillus</taxon>
        <taxon>Bacillus amyloliquefaciens group</taxon>
    </lineage>
</organism>
<name>RECX_BACVZ</name>
<proteinExistence type="inferred from homology"/>
<feature type="chain" id="PRO_1000065158" description="Regulatory protein RecX">
    <location>
        <begin position="1"/>
        <end position="263"/>
    </location>
</feature>
<comment type="function">
    <text evidence="1">Modulates RecA activity.</text>
</comment>
<comment type="subcellular location">
    <subcellularLocation>
        <location evidence="1">Cytoplasm</location>
    </subcellularLocation>
</comment>
<comment type="similarity">
    <text evidence="1">Belongs to the RecX family.</text>
</comment>
<protein>
    <recommendedName>
        <fullName evidence="1">Regulatory protein RecX</fullName>
    </recommendedName>
</protein>
<keyword id="KW-0963">Cytoplasm</keyword>
<reference key="1">
    <citation type="journal article" date="2007" name="Nat. Biotechnol.">
        <title>Comparative analysis of the complete genome sequence of the plant growth-promoting bacterium Bacillus amyloliquefaciens FZB42.</title>
        <authorList>
            <person name="Chen X.H."/>
            <person name="Koumoutsi A."/>
            <person name="Scholz R."/>
            <person name="Eisenreich A."/>
            <person name="Schneider K."/>
            <person name="Heinemeyer I."/>
            <person name="Morgenstern B."/>
            <person name="Voss B."/>
            <person name="Hess W.R."/>
            <person name="Reva O."/>
            <person name="Junge H."/>
            <person name="Voigt B."/>
            <person name="Jungblut P.R."/>
            <person name="Vater J."/>
            <person name="Suessmuth R."/>
            <person name="Liesegang H."/>
            <person name="Strittmatter A."/>
            <person name="Gottschalk G."/>
            <person name="Borriss R."/>
        </authorList>
    </citation>
    <scope>NUCLEOTIDE SEQUENCE [LARGE SCALE GENOMIC DNA]</scope>
    <source>
        <strain>DSM 23117 / BGSC 10A6 / LMG 26770 / FZB42</strain>
    </source>
</reference>
<sequence length="263" mass="31004">MPFITKISTQKKNTERFNIFLDEKYAFSVDADVLVRFDLKKGKELDELDILEIQYGDDVKKAFNRAVEFLSYRMRSEKEVRDHLKKKETPDMVISEVIHKLYDYRYLNDKEFAEAYASTHKKTNGKGPDVLFRELKAKGIDDDTIKETLSAFTFDEQIQEALKHIGKILKKDKKLSTKEIRQRAQMQLQRKGFPFDVINAALEQTEYENDDEAEMEALKAHAEKAIRKYRYDGSYESGMKVKQYLFRKGFSIDDIDQFLQEEE</sequence>